<protein>
    <recommendedName>
        <fullName evidence="1">Probable dual-specificity RNA methyltransferase RlmN</fullName>
        <ecNumber evidence="1">2.1.1.192</ecNumber>
    </recommendedName>
    <alternativeName>
        <fullName evidence="1">23S rRNA (adenine(2503)-C(2))-methyltransferase</fullName>
    </alternativeName>
    <alternativeName>
        <fullName evidence="1">23S rRNA m2A2503 methyltransferase</fullName>
    </alternativeName>
    <alternativeName>
        <fullName evidence="1">Ribosomal RNA large subunit methyltransferase N</fullName>
    </alternativeName>
    <alternativeName>
        <fullName evidence="1">tRNA (adenine(37)-C(2))-methyltransferase</fullName>
    </alternativeName>
    <alternativeName>
        <fullName evidence="1">tRNA m2A37 methyltransferase</fullName>
    </alternativeName>
</protein>
<dbReference type="EC" id="2.1.1.192" evidence="1"/>
<dbReference type="EMBL" id="AE016823">
    <property type="protein sequence ID" value="AAS71339.1"/>
    <property type="molecule type" value="Genomic_DNA"/>
</dbReference>
<dbReference type="RefSeq" id="WP_000622607.1">
    <property type="nucleotide sequence ID" value="NC_005823.1"/>
</dbReference>
<dbReference type="SMR" id="Q72NP7"/>
<dbReference type="GeneID" id="61142661"/>
<dbReference type="KEGG" id="lic:LIC_12785"/>
<dbReference type="HOGENOM" id="CLU_029101_0_1_12"/>
<dbReference type="Proteomes" id="UP000007037">
    <property type="component" value="Chromosome I"/>
</dbReference>
<dbReference type="GO" id="GO:0005737">
    <property type="term" value="C:cytoplasm"/>
    <property type="evidence" value="ECO:0007669"/>
    <property type="project" value="UniProtKB-SubCell"/>
</dbReference>
<dbReference type="GO" id="GO:0051539">
    <property type="term" value="F:4 iron, 4 sulfur cluster binding"/>
    <property type="evidence" value="ECO:0007669"/>
    <property type="project" value="UniProtKB-UniRule"/>
</dbReference>
<dbReference type="GO" id="GO:0046872">
    <property type="term" value="F:metal ion binding"/>
    <property type="evidence" value="ECO:0007669"/>
    <property type="project" value="UniProtKB-KW"/>
</dbReference>
<dbReference type="GO" id="GO:0070040">
    <property type="term" value="F:rRNA (adenine(2503)-C2-)-methyltransferase activity"/>
    <property type="evidence" value="ECO:0007669"/>
    <property type="project" value="UniProtKB-UniRule"/>
</dbReference>
<dbReference type="GO" id="GO:0019843">
    <property type="term" value="F:rRNA binding"/>
    <property type="evidence" value="ECO:0007669"/>
    <property type="project" value="UniProtKB-UniRule"/>
</dbReference>
<dbReference type="GO" id="GO:0002935">
    <property type="term" value="F:tRNA (adenine(37)-C2)-methyltransferase activity"/>
    <property type="evidence" value="ECO:0007669"/>
    <property type="project" value="UniProtKB-UniRule"/>
</dbReference>
<dbReference type="GO" id="GO:0000049">
    <property type="term" value="F:tRNA binding"/>
    <property type="evidence" value="ECO:0007669"/>
    <property type="project" value="UniProtKB-UniRule"/>
</dbReference>
<dbReference type="GO" id="GO:0070475">
    <property type="term" value="P:rRNA base methylation"/>
    <property type="evidence" value="ECO:0007669"/>
    <property type="project" value="UniProtKB-UniRule"/>
</dbReference>
<dbReference type="GO" id="GO:0030488">
    <property type="term" value="P:tRNA methylation"/>
    <property type="evidence" value="ECO:0007669"/>
    <property type="project" value="UniProtKB-UniRule"/>
</dbReference>
<dbReference type="CDD" id="cd01335">
    <property type="entry name" value="Radical_SAM"/>
    <property type="match status" value="1"/>
</dbReference>
<dbReference type="FunFam" id="3.20.20.70:FF:000014">
    <property type="entry name" value="Probable dual-specificity RNA methyltransferase RlmN"/>
    <property type="match status" value="1"/>
</dbReference>
<dbReference type="Gene3D" id="1.10.150.530">
    <property type="match status" value="1"/>
</dbReference>
<dbReference type="Gene3D" id="3.20.20.70">
    <property type="entry name" value="Aldolase class I"/>
    <property type="match status" value="1"/>
</dbReference>
<dbReference type="HAMAP" id="MF_01849">
    <property type="entry name" value="RNA_methyltr_RlmN"/>
    <property type="match status" value="1"/>
</dbReference>
<dbReference type="InterPro" id="IPR013785">
    <property type="entry name" value="Aldolase_TIM"/>
</dbReference>
<dbReference type="InterPro" id="IPR040072">
    <property type="entry name" value="Methyltransferase_A"/>
</dbReference>
<dbReference type="InterPro" id="IPR048641">
    <property type="entry name" value="RlmN_N"/>
</dbReference>
<dbReference type="InterPro" id="IPR027492">
    <property type="entry name" value="RNA_MTrfase_RlmN"/>
</dbReference>
<dbReference type="InterPro" id="IPR004383">
    <property type="entry name" value="rRNA_lsu_MTrfase_RlmN/Cfr"/>
</dbReference>
<dbReference type="InterPro" id="IPR007197">
    <property type="entry name" value="rSAM"/>
</dbReference>
<dbReference type="NCBIfam" id="TIGR00048">
    <property type="entry name" value="rRNA_mod_RlmN"/>
    <property type="match status" value="1"/>
</dbReference>
<dbReference type="PANTHER" id="PTHR30544">
    <property type="entry name" value="23S RRNA METHYLTRANSFERASE"/>
    <property type="match status" value="1"/>
</dbReference>
<dbReference type="PANTHER" id="PTHR30544:SF5">
    <property type="entry name" value="RADICAL SAM CORE DOMAIN-CONTAINING PROTEIN"/>
    <property type="match status" value="1"/>
</dbReference>
<dbReference type="Pfam" id="PF04055">
    <property type="entry name" value="Radical_SAM"/>
    <property type="match status" value="1"/>
</dbReference>
<dbReference type="Pfam" id="PF21016">
    <property type="entry name" value="RlmN_N"/>
    <property type="match status" value="1"/>
</dbReference>
<dbReference type="PIRSF" id="PIRSF006004">
    <property type="entry name" value="CHP00048"/>
    <property type="match status" value="1"/>
</dbReference>
<dbReference type="SFLD" id="SFLDF00275">
    <property type="entry name" value="adenosine_C2_methyltransferase"/>
    <property type="match status" value="1"/>
</dbReference>
<dbReference type="SFLD" id="SFLDS00029">
    <property type="entry name" value="Radical_SAM"/>
    <property type="match status" value="1"/>
</dbReference>
<dbReference type="SUPFAM" id="SSF102114">
    <property type="entry name" value="Radical SAM enzymes"/>
    <property type="match status" value="1"/>
</dbReference>
<dbReference type="PROSITE" id="PS51918">
    <property type="entry name" value="RADICAL_SAM"/>
    <property type="match status" value="1"/>
</dbReference>
<proteinExistence type="inferred from homology"/>
<reference key="1">
    <citation type="journal article" date="2004" name="J. Bacteriol.">
        <title>Comparative genomics of two Leptospira interrogans serovars reveals novel insights into physiology and pathogenesis.</title>
        <authorList>
            <person name="Nascimento A.L.T.O."/>
            <person name="Ko A.I."/>
            <person name="Martins E.A.L."/>
            <person name="Monteiro-Vitorello C.B."/>
            <person name="Ho P.L."/>
            <person name="Haake D.A."/>
            <person name="Verjovski-Almeida S."/>
            <person name="Hartskeerl R.A."/>
            <person name="Marques M.V."/>
            <person name="Oliveira M.C."/>
            <person name="Menck C.F.M."/>
            <person name="Leite L.C.C."/>
            <person name="Carrer H."/>
            <person name="Coutinho L.L."/>
            <person name="Degrave W.M."/>
            <person name="Dellagostin O.A."/>
            <person name="El-Dorry H."/>
            <person name="Ferro E.S."/>
            <person name="Ferro M.I.T."/>
            <person name="Furlan L.R."/>
            <person name="Gamberini M."/>
            <person name="Giglioti E.A."/>
            <person name="Goes-Neto A."/>
            <person name="Goldman G.H."/>
            <person name="Goldman M.H.S."/>
            <person name="Harakava R."/>
            <person name="Jeronimo S.M.B."/>
            <person name="Junqueira-de-Azevedo I.L.M."/>
            <person name="Kimura E.T."/>
            <person name="Kuramae E.E."/>
            <person name="Lemos E.G.M."/>
            <person name="Lemos M.V.F."/>
            <person name="Marino C.L."/>
            <person name="Nunes L.R."/>
            <person name="de Oliveira R.C."/>
            <person name="Pereira G.G."/>
            <person name="Reis M.S."/>
            <person name="Schriefer A."/>
            <person name="Siqueira W.J."/>
            <person name="Sommer P."/>
            <person name="Tsai S.M."/>
            <person name="Simpson A.J.G."/>
            <person name="Ferro J.A."/>
            <person name="Camargo L.E.A."/>
            <person name="Kitajima J.P."/>
            <person name="Setubal J.C."/>
            <person name="Van Sluys M.A."/>
        </authorList>
    </citation>
    <scope>NUCLEOTIDE SEQUENCE [LARGE SCALE GENOMIC DNA]</scope>
    <source>
        <strain>Fiocruz L1-130</strain>
    </source>
</reference>
<feature type="chain" id="PRO_0000350235" description="Probable dual-specificity RNA methyltransferase RlmN">
    <location>
        <begin position="1"/>
        <end position="353"/>
    </location>
</feature>
<feature type="domain" description="Radical SAM core" evidence="2">
    <location>
        <begin position="112"/>
        <end position="341"/>
    </location>
</feature>
<feature type="active site" description="Proton acceptor" evidence="1">
    <location>
        <position position="104"/>
    </location>
</feature>
<feature type="active site" description="S-methylcysteine intermediate" evidence="1">
    <location>
        <position position="346"/>
    </location>
</feature>
<feature type="binding site" evidence="1">
    <location>
        <position position="126"/>
    </location>
    <ligand>
        <name>[4Fe-4S] cluster</name>
        <dbReference type="ChEBI" id="CHEBI:49883"/>
        <note>4Fe-4S-S-AdoMet</note>
    </ligand>
</feature>
<feature type="binding site" evidence="1">
    <location>
        <position position="130"/>
    </location>
    <ligand>
        <name>[4Fe-4S] cluster</name>
        <dbReference type="ChEBI" id="CHEBI:49883"/>
        <note>4Fe-4S-S-AdoMet</note>
    </ligand>
</feature>
<feature type="binding site" evidence="1">
    <location>
        <position position="133"/>
    </location>
    <ligand>
        <name>[4Fe-4S] cluster</name>
        <dbReference type="ChEBI" id="CHEBI:49883"/>
        <note>4Fe-4S-S-AdoMet</note>
    </ligand>
</feature>
<feature type="binding site" evidence="1">
    <location>
        <begin position="173"/>
        <end position="174"/>
    </location>
    <ligand>
        <name>S-adenosyl-L-methionine</name>
        <dbReference type="ChEBI" id="CHEBI:59789"/>
    </ligand>
</feature>
<feature type="binding site" evidence="1">
    <location>
        <position position="205"/>
    </location>
    <ligand>
        <name>S-adenosyl-L-methionine</name>
        <dbReference type="ChEBI" id="CHEBI:59789"/>
    </ligand>
</feature>
<feature type="binding site" evidence="1">
    <location>
        <begin position="228"/>
        <end position="230"/>
    </location>
    <ligand>
        <name>S-adenosyl-L-methionine</name>
        <dbReference type="ChEBI" id="CHEBI:59789"/>
    </ligand>
</feature>
<feature type="binding site" evidence="1">
    <location>
        <position position="304"/>
    </location>
    <ligand>
        <name>S-adenosyl-L-methionine</name>
        <dbReference type="ChEBI" id="CHEBI:59789"/>
    </ligand>
</feature>
<feature type="disulfide bond" description="(transient)" evidence="1">
    <location>
        <begin position="119"/>
        <end position="346"/>
    </location>
</feature>
<gene>
    <name evidence="1" type="primary">rlmN</name>
    <name type="ordered locus">LIC_12785</name>
</gene>
<sequence>MISENLGENQTEKIPLKGRTLKELSEIMITLGEKPFRAKQIYHGLYVNRYETWDQFTTFSKIFKEKLEELCSLTHLQVVKQLKSVDGTQKFTFTSESGNGKEFEAVWIPSGDGGRKTICISSQIGCTLNCKFCATAKLEFQGNLKAHEIVDQILQVEKIVGDKATNVVFMGMGEPLHNYFNVIRAASIFHDPDALNLGAKRITISTSGVVNGIRRFIENKEPYNFAISLNHPDPKGRLQIMDIEEKFSLPELLQAAKDFTRELKRRITFEYVMIPGVNMGFENANKLVKIAKSLDCKINVIPLNTEFFGWRRPTREEIAEFIALLEPAGVPILNRRSPGKDIFGACGMLASKS</sequence>
<comment type="function">
    <text evidence="1">Specifically methylates position 2 of adenine 2503 in 23S rRNA and position 2 of adenine 37 in tRNAs.</text>
</comment>
<comment type="catalytic activity">
    <reaction evidence="1">
        <text>adenosine(2503) in 23S rRNA + 2 reduced [2Fe-2S]-[ferredoxin] + 2 S-adenosyl-L-methionine = 2-methyladenosine(2503) in 23S rRNA + 5'-deoxyadenosine + L-methionine + 2 oxidized [2Fe-2S]-[ferredoxin] + S-adenosyl-L-homocysteine</text>
        <dbReference type="Rhea" id="RHEA:42916"/>
        <dbReference type="Rhea" id="RHEA-COMP:10000"/>
        <dbReference type="Rhea" id="RHEA-COMP:10001"/>
        <dbReference type="Rhea" id="RHEA-COMP:10152"/>
        <dbReference type="Rhea" id="RHEA-COMP:10282"/>
        <dbReference type="ChEBI" id="CHEBI:17319"/>
        <dbReference type="ChEBI" id="CHEBI:33737"/>
        <dbReference type="ChEBI" id="CHEBI:33738"/>
        <dbReference type="ChEBI" id="CHEBI:57844"/>
        <dbReference type="ChEBI" id="CHEBI:57856"/>
        <dbReference type="ChEBI" id="CHEBI:59789"/>
        <dbReference type="ChEBI" id="CHEBI:74411"/>
        <dbReference type="ChEBI" id="CHEBI:74497"/>
        <dbReference type="EC" id="2.1.1.192"/>
    </reaction>
</comment>
<comment type="catalytic activity">
    <reaction evidence="1">
        <text>adenosine(37) in tRNA + 2 reduced [2Fe-2S]-[ferredoxin] + 2 S-adenosyl-L-methionine = 2-methyladenosine(37) in tRNA + 5'-deoxyadenosine + L-methionine + 2 oxidized [2Fe-2S]-[ferredoxin] + S-adenosyl-L-homocysteine</text>
        <dbReference type="Rhea" id="RHEA:43332"/>
        <dbReference type="Rhea" id="RHEA-COMP:10000"/>
        <dbReference type="Rhea" id="RHEA-COMP:10001"/>
        <dbReference type="Rhea" id="RHEA-COMP:10162"/>
        <dbReference type="Rhea" id="RHEA-COMP:10485"/>
        <dbReference type="ChEBI" id="CHEBI:17319"/>
        <dbReference type="ChEBI" id="CHEBI:33737"/>
        <dbReference type="ChEBI" id="CHEBI:33738"/>
        <dbReference type="ChEBI" id="CHEBI:57844"/>
        <dbReference type="ChEBI" id="CHEBI:57856"/>
        <dbReference type="ChEBI" id="CHEBI:59789"/>
        <dbReference type="ChEBI" id="CHEBI:74411"/>
        <dbReference type="ChEBI" id="CHEBI:74497"/>
        <dbReference type="EC" id="2.1.1.192"/>
    </reaction>
</comment>
<comment type="cofactor">
    <cofactor evidence="1">
        <name>[4Fe-4S] cluster</name>
        <dbReference type="ChEBI" id="CHEBI:49883"/>
    </cofactor>
    <text evidence="1">Binds 1 [4Fe-4S] cluster. The cluster is coordinated with 3 cysteines and an exchangeable S-adenosyl-L-methionine.</text>
</comment>
<comment type="subcellular location">
    <subcellularLocation>
        <location evidence="1">Cytoplasm</location>
    </subcellularLocation>
</comment>
<comment type="miscellaneous">
    <text evidence="1">Reaction proceeds by a ping-pong mechanism involving intermediate methylation of a conserved cysteine residue.</text>
</comment>
<comment type="similarity">
    <text evidence="1">Belongs to the radical SAM superfamily. RlmN family.</text>
</comment>
<evidence type="ECO:0000255" key="1">
    <source>
        <dbReference type="HAMAP-Rule" id="MF_01849"/>
    </source>
</evidence>
<evidence type="ECO:0000255" key="2">
    <source>
        <dbReference type="PROSITE-ProRule" id="PRU01266"/>
    </source>
</evidence>
<accession>Q72NP7</accession>
<organism>
    <name type="scientific">Leptospira interrogans serogroup Icterohaemorrhagiae serovar copenhageni (strain Fiocruz L1-130)</name>
    <dbReference type="NCBI Taxonomy" id="267671"/>
    <lineage>
        <taxon>Bacteria</taxon>
        <taxon>Pseudomonadati</taxon>
        <taxon>Spirochaetota</taxon>
        <taxon>Spirochaetia</taxon>
        <taxon>Leptospirales</taxon>
        <taxon>Leptospiraceae</taxon>
        <taxon>Leptospira</taxon>
    </lineage>
</organism>
<name>RLMN_LEPIC</name>
<keyword id="KW-0004">4Fe-4S</keyword>
<keyword id="KW-0963">Cytoplasm</keyword>
<keyword id="KW-1015">Disulfide bond</keyword>
<keyword id="KW-0408">Iron</keyword>
<keyword id="KW-0411">Iron-sulfur</keyword>
<keyword id="KW-0479">Metal-binding</keyword>
<keyword id="KW-0489">Methyltransferase</keyword>
<keyword id="KW-0698">rRNA processing</keyword>
<keyword id="KW-0949">S-adenosyl-L-methionine</keyword>
<keyword id="KW-0808">Transferase</keyword>
<keyword id="KW-0819">tRNA processing</keyword>